<evidence type="ECO:0000255" key="1">
    <source>
        <dbReference type="HAMAP-Rule" id="MF_01341"/>
    </source>
</evidence>
<evidence type="ECO:0000256" key="2">
    <source>
        <dbReference type="SAM" id="MobiDB-lite"/>
    </source>
</evidence>
<evidence type="ECO:0000305" key="3"/>
<feature type="chain" id="PRO_0000251502" description="Large ribosomal subunit protein uL15">
    <location>
        <begin position="1"/>
        <end position="144"/>
    </location>
</feature>
<feature type="region of interest" description="Disordered" evidence="2">
    <location>
        <begin position="1"/>
        <end position="52"/>
    </location>
</feature>
<feature type="compositionally biased region" description="Gly residues" evidence="2">
    <location>
        <begin position="22"/>
        <end position="32"/>
    </location>
</feature>
<comment type="function">
    <text evidence="1">Binds to the 23S rRNA.</text>
</comment>
<comment type="subunit">
    <text evidence="1">Part of the 50S ribosomal subunit.</text>
</comment>
<comment type="similarity">
    <text evidence="1">Belongs to the universal ribosomal protein uL15 family.</text>
</comment>
<organism>
    <name type="scientific">Chlamydia felis (strain Fe/C-56)</name>
    <name type="common">Chlamydophila felis</name>
    <dbReference type="NCBI Taxonomy" id="264202"/>
    <lineage>
        <taxon>Bacteria</taxon>
        <taxon>Pseudomonadati</taxon>
        <taxon>Chlamydiota</taxon>
        <taxon>Chlamydiia</taxon>
        <taxon>Chlamydiales</taxon>
        <taxon>Chlamydiaceae</taxon>
        <taxon>Chlamydia/Chlamydophila group</taxon>
        <taxon>Chlamydia</taxon>
    </lineage>
</organism>
<keyword id="KW-0687">Ribonucleoprotein</keyword>
<keyword id="KW-0689">Ribosomal protein</keyword>
<keyword id="KW-0694">RNA-binding</keyword>
<keyword id="KW-0699">rRNA-binding</keyword>
<protein>
    <recommendedName>
        <fullName evidence="1">Large ribosomal subunit protein uL15</fullName>
    </recommendedName>
    <alternativeName>
        <fullName evidence="3">50S ribosomal protein L15</fullName>
    </alternativeName>
</protein>
<sequence>MIKLESLQDPSPRKRRKKLLGRGPGSGHGKTSGRGHKGDGSRSGYKRRFGYEGGGVPLYRRVPTRGFSHARFDECVEEITTQRLNSLFNEGEEITLDALKQKKAIDKHAIRVKVIVKGELEKTFIWKDANVVLSQGVRNLIGVA</sequence>
<accession>Q252X0</accession>
<reference key="1">
    <citation type="journal article" date="2006" name="DNA Res.">
        <title>Genome sequence of the cat pathogen, Chlamydophila felis.</title>
        <authorList>
            <person name="Azuma Y."/>
            <person name="Hirakawa H."/>
            <person name="Yamashita A."/>
            <person name="Cai Y."/>
            <person name="Rahman M.A."/>
            <person name="Suzuki H."/>
            <person name="Mitaku S."/>
            <person name="Toh H."/>
            <person name="Goto S."/>
            <person name="Murakami T."/>
            <person name="Sugi K."/>
            <person name="Hayashi H."/>
            <person name="Fukushi H."/>
            <person name="Hattori M."/>
            <person name="Kuhara S."/>
            <person name="Shirai M."/>
        </authorList>
    </citation>
    <scope>NUCLEOTIDE SEQUENCE [LARGE SCALE GENOMIC DNA]</scope>
    <source>
        <strain>Fe/C-56</strain>
    </source>
</reference>
<proteinExistence type="inferred from homology"/>
<dbReference type="EMBL" id="AP006861">
    <property type="protein sequence ID" value="BAE81668.1"/>
    <property type="molecule type" value="Genomic_DNA"/>
</dbReference>
<dbReference type="RefSeq" id="WP_011458442.1">
    <property type="nucleotide sequence ID" value="NC_007899.1"/>
</dbReference>
<dbReference type="SMR" id="Q252X0"/>
<dbReference type="STRING" id="264202.CF0896"/>
<dbReference type="KEGG" id="cfe:CF0896"/>
<dbReference type="eggNOG" id="COG0200">
    <property type="taxonomic scope" value="Bacteria"/>
</dbReference>
<dbReference type="HOGENOM" id="CLU_055188_4_2_0"/>
<dbReference type="OrthoDB" id="9810293at2"/>
<dbReference type="Proteomes" id="UP000001260">
    <property type="component" value="Chromosome"/>
</dbReference>
<dbReference type="GO" id="GO:0022625">
    <property type="term" value="C:cytosolic large ribosomal subunit"/>
    <property type="evidence" value="ECO:0007669"/>
    <property type="project" value="TreeGrafter"/>
</dbReference>
<dbReference type="GO" id="GO:0019843">
    <property type="term" value="F:rRNA binding"/>
    <property type="evidence" value="ECO:0007669"/>
    <property type="project" value="UniProtKB-UniRule"/>
</dbReference>
<dbReference type="GO" id="GO:0003735">
    <property type="term" value="F:structural constituent of ribosome"/>
    <property type="evidence" value="ECO:0007669"/>
    <property type="project" value="InterPro"/>
</dbReference>
<dbReference type="GO" id="GO:0006412">
    <property type="term" value="P:translation"/>
    <property type="evidence" value="ECO:0007669"/>
    <property type="project" value="UniProtKB-UniRule"/>
</dbReference>
<dbReference type="Gene3D" id="3.100.10.10">
    <property type="match status" value="1"/>
</dbReference>
<dbReference type="HAMAP" id="MF_01341">
    <property type="entry name" value="Ribosomal_uL15"/>
    <property type="match status" value="1"/>
</dbReference>
<dbReference type="InterPro" id="IPR030878">
    <property type="entry name" value="Ribosomal_uL15"/>
</dbReference>
<dbReference type="InterPro" id="IPR036227">
    <property type="entry name" value="Ribosomal_uL15/eL18_sf"/>
</dbReference>
<dbReference type="InterPro" id="IPR005749">
    <property type="entry name" value="Ribosomal_uL15_bac-type"/>
</dbReference>
<dbReference type="NCBIfam" id="TIGR01071">
    <property type="entry name" value="rplO_bact"/>
    <property type="match status" value="1"/>
</dbReference>
<dbReference type="PANTHER" id="PTHR12934">
    <property type="entry name" value="50S RIBOSOMAL PROTEIN L15"/>
    <property type="match status" value="1"/>
</dbReference>
<dbReference type="PANTHER" id="PTHR12934:SF11">
    <property type="entry name" value="LARGE RIBOSOMAL SUBUNIT PROTEIN UL15M"/>
    <property type="match status" value="1"/>
</dbReference>
<dbReference type="SUPFAM" id="SSF52080">
    <property type="entry name" value="Ribosomal proteins L15p and L18e"/>
    <property type="match status" value="1"/>
</dbReference>
<gene>
    <name evidence="1" type="primary">rplO</name>
    <name type="ordered locus">CF0896</name>
</gene>
<name>RL15_CHLFF</name>